<protein>
    <recommendedName>
        <fullName evidence="15">Histone-lysine N-methyltransferase SETD2</fullName>
        <ecNumber evidence="8">2.1.1.359</ecNumber>
    </recommendedName>
    <alternativeName>
        <fullName evidence="1">Lysine N-methyltransferase 3A</fullName>
    </alternativeName>
    <alternativeName>
        <fullName evidence="15">Protein-lysine N-methyltransferase SETD2</fullName>
        <ecNumber evidence="11">2.1.1.-</ecNumber>
    </alternativeName>
    <alternativeName>
        <fullName evidence="14">SET domain-containing protein 2</fullName>
    </alternativeName>
</protein>
<organism>
    <name type="scientific">Mus musculus</name>
    <name type="common">Mouse</name>
    <dbReference type="NCBI Taxonomy" id="10090"/>
    <lineage>
        <taxon>Eukaryota</taxon>
        <taxon>Metazoa</taxon>
        <taxon>Chordata</taxon>
        <taxon>Craniata</taxon>
        <taxon>Vertebrata</taxon>
        <taxon>Euteleostomi</taxon>
        <taxon>Mammalia</taxon>
        <taxon>Eutheria</taxon>
        <taxon>Euarchontoglires</taxon>
        <taxon>Glires</taxon>
        <taxon>Rodentia</taxon>
        <taxon>Myomorpha</taxon>
        <taxon>Muroidea</taxon>
        <taxon>Muridae</taxon>
        <taxon>Murinae</taxon>
        <taxon>Mus</taxon>
        <taxon>Mus</taxon>
    </lineage>
</organism>
<comment type="function">
    <text evidence="1 8 9 10 11">Histone methyltransferase that specifically trimethylates 'Lys-36' of histone H3 (H3K36me3) using dimethylated 'Lys-36' (H3K36me2) as substrate (PubMed:18157086, PubMed:20133625). It is capable of trimethylating unmethylated H3K36 (H3K36me0) in vitro (By similarity). Represents the main enzyme generating H3K36me3, a specific tag for epigenetic transcriptional activation (PubMed:18157086, PubMed:20133625). Plays a role in chromatin structure modulation during elongation by coordinating recruitment of the FACT complex and by interacting with hyperphosphorylated POLR2A (By similarity). Acts as a key regulator of DNA mismatch repair in G1 and early S phase by generating H3K36me3, a mark required to recruit MSH6 subunit of the MutS alpha complex: early recruitment of the MutS alpha complex to chromatin to be replicated allows a quick identification of mismatch DNA to initiate the mismatch repair reaction (By similarity). Required for DNA double-strand break repair in response to DNA damage: acts by mediating formation of H3K36me3, promoting recruitment of RAD51 and DNA repair via homologous recombination (HR) (By similarity). Acts as a tumor suppressor (By similarity). H3K36me3 also plays an essential role in the maintenance of a heterochromatic state, by recruiting DNA methyltransferase DNMT3A (By similarity). H3K36me3 is also enhanced in intron-containing genes, suggesting that SETD2 recruitment is enhanced by splicing and that splicing is coupled to recruitment of elongating RNA polymerase (By similarity). Required during angiogenesis (PubMed:20133625). Required for endoderm development by promoting embryonic stem cell differentiation toward endoderm: acts by mediating formation of H3K36me3 in distal promoter regions of FGFR3, leading to regulate transcription initiation of FGFR3 (PubMed:25242323). In addition to histones, also mediates methylation of other proteins, such as tubulins and STAT1 (PubMed:27518565). Trimethylates 'Lys-40' of alpha-tubulins such as TUBA1B (alpha-TubK40me3); alpha-TubK40me3 is required for normal mitosis and cytokinesis and may be a specific tag in cytoskeletal remodeling (PubMed:27518565). Involved in interferon-alpha-induced antiviral defense by mediating both monomethylation of STAT1 at 'Lys-525' and catalyzing H3K36me3 on promoters of some interferon-stimulated genes (ISGs) to activate gene transcription (By similarity).</text>
</comment>
<comment type="catalytic activity">
    <reaction evidence="8">
        <text>L-lysyl(36)-[histone H3] + 3 S-adenosyl-L-methionine = N(6),N(6),N(6)-trimethyl-L-lysyl(36)-[histone H3] + 3 S-adenosyl-L-homocysteine + 3 H(+)</text>
        <dbReference type="Rhea" id="RHEA:60324"/>
        <dbReference type="Rhea" id="RHEA-COMP:9785"/>
        <dbReference type="Rhea" id="RHEA-COMP:15536"/>
        <dbReference type="ChEBI" id="CHEBI:15378"/>
        <dbReference type="ChEBI" id="CHEBI:29969"/>
        <dbReference type="ChEBI" id="CHEBI:57856"/>
        <dbReference type="ChEBI" id="CHEBI:59789"/>
        <dbReference type="ChEBI" id="CHEBI:61961"/>
        <dbReference type="EC" id="2.1.1.359"/>
    </reaction>
</comment>
<comment type="catalytic activity">
    <reaction evidence="1">
        <text>L-lysyl-[protein] + S-adenosyl-L-methionine = N(6)-methyl-L-lysyl-[protein] + S-adenosyl-L-homocysteine + H(+)</text>
        <dbReference type="Rhea" id="RHEA:51736"/>
        <dbReference type="Rhea" id="RHEA-COMP:9752"/>
        <dbReference type="Rhea" id="RHEA-COMP:13053"/>
        <dbReference type="ChEBI" id="CHEBI:15378"/>
        <dbReference type="ChEBI" id="CHEBI:29969"/>
        <dbReference type="ChEBI" id="CHEBI:57856"/>
        <dbReference type="ChEBI" id="CHEBI:59789"/>
        <dbReference type="ChEBI" id="CHEBI:61929"/>
    </reaction>
</comment>
<comment type="catalytic activity">
    <reaction evidence="11">
        <text>L-lysyl-[protein] + 3 S-adenosyl-L-methionine = N(6),N(6),N(6)-trimethyl-L-lysyl-[protein] + 3 S-adenosyl-L-homocysteine + 3 H(+)</text>
        <dbReference type="Rhea" id="RHEA:54192"/>
        <dbReference type="Rhea" id="RHEA-COMP:9752"/>
        <dbReference type="Rhea" id="RHEA-COMP:13826"/>
        <dbReference type="ChEBI" id="CHEBI:15378"/>
        <dbReference type="ChEBI" id="CHEBI:29969"/>
        <dbReference type="ChEBI" id="CHEBI:57856"/>
        <dbReference type="ChEBI" id="CHEBI:59789"/>
        <dbReference type="ChEBI" id="CHEBI:61961"/>
    </reaction>
</comment>
<comment type="activity regulation">
    <text evidence="1">Specifically inhibited by sinefungin derivatives.</text>
</comment>
<comment type="subunit">
    <text evidence="1">Specifically interacts with hyperphosphorylated C-terminal domain (CTD) of RNA polymerase II large subunit (POLR2A): binds to CTD heptad repeats doubly phosphorylated on 'Ser-2' and 'Ser-5' of each heptad. Interacts with HTT. Interacts with IWS1. Interacts with p53/TP53; leading to regulate p53/TP53 target genes. Component of a complex with HNRNPL. Interacts with TUBA1A; the interaction is independent on alpha-tubulin acetylation on 'Lys-40'.</text>
</comment>
<comment type="subcellular location">
    <subcellularLocation>
        <location evidence="8">Nucleus</location>
    </subcellularLocation>
    <subcellularLocation>
        <location evidence="8">Chromosome</location>
    </subcellularLocation>
</comment>
<comment type="alternative products">
    <event type="alternative splicing"/>
    <isoform>
        <id>E9Q5F9-1</id>
        <name>1</name>
        <sequence type="displayed"/>
    </isoform>
    <isoform>
        <id>E9Q5F9-2</id>
        <name>2</name>
        <sequence type="described" ref="VSP_047946"/>
    </isoform>
</comment>
<comment type="domain">
    <text evidence="1">The low charge region mediates the transcriptional activation activity.</text>
</comment>
<comment type="PTM">
    <text evidence="1">May be automethylated.</text>
</comment>
<comment type="disruption phenotype">
    <text evidence="9">Embryonic lethality at 10.5-11.5 dpc. Embryos show severe vascular defects in embryo, yolk sac and placenta. Capillaries are abnormally dilated in embryos and yolk sacs and cannot be remodeled into large blood vessels or intricate networks. The embryonic vessels fail to invade the labyrinthine layer of placenta, which impair the embryonic-maternal vascular connection. Defects are not caused by the extraembryonic tissues. Impaired H3K36me3, but not H3K36me2 or H3K36me1.</text>
</comment>
<comment type="similarity">
    <text evidence="4">Belongs to the class V-like SAM-binding methyltransferase superfamily. Histone-lysine methyltransferase family. SET2 subfamily.</text>
</comment>
<sequence>MKPLPSQQPPPKMGDFYDPEHPTPEEEENEAKIENVQKTGFIKGPVFKGVASSRFLPKGTKTKVNLEEQGRQKVSFSFSFTKKTLQNRFLTALSNEKQSDSPNSPAPPLQVDSNPKVKMDAGDTFPATEESSPPKSRVELGRIHFKKHLLHVTSRPQLAASTTAASPLPPTTQLPAVLAESMIDSPPSSPPPPPPPPQASSPSPPAQISEPVALPQPPATALMTSPPGPLPGDVAVRAQKESPVKSGPEVLEVDTKQDIVSNSLEEHTVQTLKEQADHLLQKEDSHIGKEEEVSDGSKISLSSKKASSKKKSSQFEGTFLGSESDEDSVRTSSSQRSHDLKSSTSIDKERDFKKSSAPSKSEDLGKSSRSKTERDDRYCSYSKLERDTRYVSSRCRSERDRRRSRSRSRSDRASRTSLSYSRSERSHYYDSERRYHRSSPYRERTRYSRPYTDNRARESSDSEDEYKKTYPRRTSAHSYRDLRTSSSYSKFDRDCKTETSYLEMERRGKYTSKLERESKRTSEHETIKRCCSPPNELGFRRGSSYSKHDNSTSRYKSALSKSISKNDKFKNSFCCTELNEENKQSHSFSLQTPCSKGSELRTINKISEREKTGSPTPSNQLNDSPTFKKLDESPVLKPEFIGHDGRESIKELELSKVKNDQLRNFCSIELNVNGSPETEADVATFCTSKTDAISMTSDDSVTGSEVSPLIKACMLSSNGFQNVGRCRERDSDDTCRQHNTSKSPFREMEPLLSPHHDKLMSLPVKTIDYPKTLIKEPVDKRHSCCKTKDSDIYCSPNENPEAENAEPSAMTISSHSFVNVHLESKTVICDNREPTDRHSENTCDEYKQSIGSTSSASHNHFDGLYEPIGSSGISSLQSPPSGIRCEENTSPTLDAVESKKGIDFLKYARKETDVGSALPDSGKGFSWENRHNNVLSGQSLQEAQEEGNSILHERRGRPEIPLDEEQRGHTHISDDSEVVFPYDLNLTMEDSDGITYTLKCDSSGNAPEIVSTVHEDYSGSSASSSDESDSEDTESDDSSIPRNRLQSVVVVPKNSTLPMEETSPCSSRSSQSYKHYSDRWEDGLETRRHAYEEEYESKGCSQTEKYFLHKGTERSAESCYSQFGRKADNHLPDIAHAQSDGVDSTSQTDSRSDHLGHLNPEDTLRAKTSRPQELPVYSDDFEDLPNKSRQQMIFSNRPDSSRLGKTELSFSSSCDISRMDGLHSSEELRNLGWDFSQQERPTTTYQQPDSSYGTCGTHKYQQSTEHYGGTHNYWQGNGYWDPRSAGRPPGTGLAYDRIQGQVPDSLTDDREEEEHWDQRSGSHFSSPSNKFFFHQKDKGSVQAPEISSNSIKDALVMNERKDFSKNFEKNDIKERGPPKKRRQELESDSESDGELQARKKVRVEMEQGESSVPQHSELMGPSCAMDDFRDPQRWKEFAKLGKMPCYFDLIEENVYLTERKKNKSHRDIKRMQCECTPLSKDERAQGEVACGEDCLNRLLMIECSSRCPNGDYCSNRRFQRKQHADVEVILTEKKGWGLRAAKDLPSNTFVLEYCGEVLDHKEFKARVKEYARNKNIHYYFMALKNDEIIDATQKGNCSRFMNHSCEPNCETQKWTVNGQLRVGFFTTKLVPSGSELTFDYQFQRYGKEAQKCFCGSANCRGYLGGENRVSIRAAGGKMKKERSRKKDSVDGELEALMENGEGLSDKNQVLSLSRLMVRIETLEQKLTCLKLIQNTHSQSCLKSFLERHGLSLLWIWMAELGDGRESNQKLQEEIIKTLEHLPIPTKNMLEESKVLPIIQRWSQTKTAVPQLSEGDGYSSENTSRAHTPLNTPDPSAKPSTEMDTDTPKKLIFRRLKIISENSMDSAVSDVTSELECKDGKEDLDQLETVTVEEDEELQSQQLLPQQLCESKVESEATIEVSKLPTSEPEADTETEPKDSNGTKLEETIAEETPSQDEEEGVSDVESERSQEPPDKTVDISDLATKLLDSWKDLKEVYRIPKKSQTEKESTVAERGRDAAAFRDQTAPKTPNRSRERDPDKQSQNKEKRKRRGSLSPPSSAYERGTKRPDDRYDTPTSKKKVRIKDRNKLSTEERRKLFEQEVAQREAQKQQQQMQNLGMTSPLPFDSLGYNASHHPFAGYPPGYPMQAYVDPSNPNAGKVLLPTPSMDPVCSPAPYDHAQPLVGHSTESLAAPPSVPVVPHVAASVEVSSSQYVAQNESVVHQDSNVPVMPVQAPGPVQGQNYNVWESNQQSVSVQQQYSPAQSQTTIYYQGQTCSTVYSVTSPYSQTTPPIVQSYAQPSLQYIQGQQIFTAHPQGVVVQPTAAVTSIVAPGQPQSLQPPEMVVTNNLLDLPPPSPPKPKTIVLPPNWKTARDPEGKIYYYHVITRQTQWDPPTWESPGDDASLEHEAEMDLGTPTYDENPMKTSKKPKTAEADTSSELAKKSKEVFRKEMSQFIVQCLNPYRKPDCKVGRITTTEDFKHLARKLTHGVMNKELKYCKNPEDLECNENVKHKTKEYIKKYMQKFGAVYKPKEDTELE</sequence>
<feature type="chain" id="PRO_0000423553" description="Histone-lysine N-methyltransferase SETD2">
    <location>
        <begin position="1"/>
        <end position="2537"/>
    </location>
</feature>
<feature type="domain" description="AWS" evidence="6">
    <location>
        <begin position="1468"/>
        <end position="1522"/>
    </location>
</feature>
<feature type="domain" description="SET" evidence="4">
    <location>
        <begin position="1524"/>
        <end position="1641"/>
    </location>
</feature>
<feature type="domain" description="Post-SET" evidence="3">
    <location>
        <begin position="1648"/>
        <end position="1664"/>
    </location>
</feature>
<feature type="domain" description="WW" evidence="5">
    <location>
        <begin position="2362"/>
        <end position="2395"/>
    </location>
</feature>
<feature type="region of interest" description="Disordered" evidence="7">
    <location>
        <begin position="1"/>
        <end position="31"/>
    </location>
</feature>
<feature type="region of interest" description="Disordered" evidence="7">
    <location>
        <begin position="91"/>
        <end position="142"/>
    </location>
</feature>
<feature type="region of interest" description="Disordered" evidence="7">
    <location>
        <begin position="156"/>
        <end position="483"/>
    </location>
</feature>
<feature type="region of interest" description="Disordered" evidence="7">
    <location>
        <begin position="510"/>
        <end position="554"/>
    </location>
</feature>
<feature type="region of interest" description="Disordered" evidence="7">
    <location>
        <begin position="607"/>
        <end position="629"/>
    </location>
</feature>
<feature type="region of interest" description="Disordered" evidence="7">
    <location>
        <begin position="729"/>
        <end position="749"/>
    </location>
</feature>
<feature type="region of interest" description="Disordered" evidence="7">
    <location>
        <begin position="829"/>
        <end position="894"/>
    </location>
</feature>
<feature type="region of interest" description="Disordered" evidence="7">
    <location>
        <begin position="941"/>
        <end position="974"/>
    </location>
</feature>
<feature type="region of interest" description="Disordered" evidence="7">
    <location>
        <begin position="1015"/>
        <end position="1078"/>
    </location>
</feature>
<feature type="region of interest" description="Disordered" evidence="7">
    <location>
        <begin position="1135"/>
        <end position="1185"/>
    </location>
</feature>
<feature type="region of interest" description="Disordered" evidence="7">
    <location>
        <begin position="1232"/>
        <end position="1254"/>
    </location>
</feature>
<feature type="region of interest" description="Disordered" evidence="7">
    <location>
        <begin position="1280"/>
        <end position="1346"/>
    </location>
</feature>
<feature type="region of interest" description="Disordered" evidence="7">
    <location>
        <begin position="1366"/>
        <end position="1396"/>
    </location>
</feature>
<feature type="region of interest" description="Interaction with TUBA1A" evidence="1">
    <location>
        <begin position="1392"/>
        <end position="1688"/>
    </location>
</feature>
<feature type="region of interest" description="Disordered" evidence="7">
    <location>
        <begin position="1806"/>
        <end position="1848"/>
    </location>
</feature>
<feature type="region of interest" description="Disordered" evidence="7">
    <location>
        <begin position="1914"/>
        <end position="1981"/>
    </location>
</feature>
<feature type="region of interest" description="Disordered" evidence="7">
    <location>
        <begin position="1993"/>
        <end position="2110"/>
    </location>
</feature>
<feature type="region of interest" description="Low charge region" evidence="1">
    <location>
        <begin position="2110"/>
        <end position="2339"/>
    </location>
</feature>
<feature type="region of interest" description="Disordered" evidence="7">
    <location>
        <begin position="2412"/>
        <end position="2438"/>
    </location>
</feature>
<feature type="region of interest" description="Interaction with POLR2A" evidence="1">
    <location>
        <begin position="2430"/>
        <end position="2537"/>
    </location>
</feature>
<feature type="coiled-coil region" evidence="2">
    <location>
        <begin position="2090"/>
        <end position="2119"/>
    </location>
</feature>
<feature type="compositionally biased region" description="Pro residues" evidence="7">
    <location>
        <begin position="1"/>
        <end position="12"/>
    </location>
</feature>
<feature type="compositionally biased region" description="Basic and acidic residues" evidence="7">
    <location>
        <begin position="18"/>
        <end position="31"/>
    </location>
</feature>
<feature type="compositionally biased region" description="Polar residues" evidence="7">
    <location>
        <begin position="91"/>
        <end position="103"/>
    </location>
</feature>
<feature type="compositionally biased region" description="Low complexity" evidence="7">
    <location>
        <begin position="156"/>
        <end position="166"/>
    </location>
</feature>
<feature type="compositionally biased region" description="Pro residues" evidence="7">
    <location>
        <begin position="187"/>
        <end position="205"/>
    </location>
</feature>
<feature type="compositionally biased region" description="Basic and acidic residues" evidence="7">
    <location>
        <begin position="264"/>
        <end position="291"/>
    </location>
</feature>
<feature type="compositionally biased region" description="Basic and acidic residues" evidence="7">
    <location>
        <begin position="336"/>
        <end position="401"/>
    </location>
</feature>
<feature type="compositionally biased region" description="Basic and acidic residues" evidence="7">
    <location>
        <begin position="422"/>
        <end position="433"/>
    </location>
</feature>
<feature type="compositionally biased region" description="Basic and acidic residues" evidence="7">
    <location>
        <begin position="440"/>
        <end position="468"/>
    </location>
</feature>
<feature type="compositionally biased region" description="Basic and acidic residues" evidence="7">
    <location>
        <begin position="510"/>
        <end position="528"/>
    </location>
</feature>
<feature type="compositionally biased region" description="Polar residues" evidence="7">
    <location>
        <begin position="613"/>
        <end position="625"/>
    </location>
</feature>
<feature type="compositionally biased region" description="Basic and acidic residues" evidence="7">
    <location>
        <begin position="830"/>
        <end position="847"/>
    </location>
</feature>
<feature type="compositionally biased region" description="Polar residues" evidence="7">
    <location>
        <begin position="849"/>
        <end position="858"/>
    </location>
</feature>
<feature type="compositionally biased region" description="Low complexity" evidence="7">
    <location>
        <begin position="867"/>
        <end position="883"/>
    </location>
</feature>
<feature type="compositionally biased region" description="Basic and acidic residues" evidence="7">
    <location>
        <begin position="951"/>
        <end position="974"/>
    </location>
</feature>
<feature type="compositionally biased region" description="Acidic residues" evidence="7">
    <location>
        <begin position="1026"/>
        <end position="1037"/>
    </location>
</feature>
<feature type="compositionally biased region" description="Basic and acidic residues" evidence="7">
    <location>
        <begin position="1150"/>
        <end position="1165"/>
    </location>
</feature>
<feature type="compositionally biased region" description="Polar residues" evidence="7">
    <location>
        <begin position="1235"/>
        <end position="1254"/>
    </location>
</feature>
<feature type="compositionally biased region" description="Polar residues" evidence="7">
    <location>
        <begin position="1319"/>
        <end position="1329"/>
    </location>
</feature>
<feature type="compositionally biased region" description="Basic and acidic residues" evidence="7">
    <location>
        <begin position="1366"/>
        <end position="1377"/>
    </location>
</feature>
<feature type="compositionally biased region" description="Polar residues" evidence="7">
    <location>
        <begin position="1818"/>
        <end position="1833"/>
    </location>
</feature>
<feature type="compositionally biased region" description="Basic and acidic residues" evidence="7">
    <location>
        <begin position="1934"/>
        <end position="1946"/>
    </location>
</feature>
<feature type="compositionally biased region" description="Acidic residues" evidence="7">
    <location>
        <begin position="1947"/>
        <end position="1964"/>
    </location>
</feature>
<feature type="compositionally biased region" description="Basic and acidic residues" evidence="7">
    <location>
        <begin position="1965"/>
        <end position="1978"/>
    </location>
</feature>
<feature type="compositionally biased region" description="Basic and acidic residues" evidence="7">
    <location>
        <begin position="1993"/>
        <end position="2020"/>
    </location>
</feature>
<feature type="compositionally biased region" description="Basic and acidic residues" evidence="7">
    <location>
        <begin position="2032"/>
        <end position="2045"/>
    </location>
</feature>
<feature type="compositionally biased region" description="Basic and acidic residues" evidence="7">
    <location>
        <begin position="2063"/>
        <end position="2073"/>
    </location>
</feature>
<feature type="compositionally biased region" description="Basic and acidic residues" evidence="7">
    <location>
        <begin position="2084"/>
        <end position="2108"/>
    </location>
</feature>
<feature type="binding site" evidence="1">
    <location>
        <position position="1473"/>
    </location>
    <ligand>
        <name>Zn(2+)</name>
        <dbReference type="ChEBI" id="CHEBI:29105"/>
        <label>1</label>
    </ligand>
</feature>
<feature type="binding site" evidence="1">
    <location>
        <position position="1475"/>
    </location>
    <ligand>
        <name>Zn(2+)</name>
        <dbReference type="ChEBI" id="CHEBI:29105"/>
        <label>1</label>
    </ligand>
</feature>
<feature type="binding site" evidence="1">
    <location>
        <position position="1490"/>
    </location>
    <ligand>
        <name>Zn(2+)</name>
        <dbReference type="ChEBI" id="CHEBI:29105"/>
        <label>1</label>
    </ligand>
</feature>
<feature type="binding site" evidence="1">
    <location>
        <position position="1490"/>
    </location>
    <ligand>
        <name>Zn(2+)</name>
        <dbReference type="ChEBI" id="CHEBI:29105"/>
        <label>2</label>
    </ligand>
</feature>
<feature type="binding site" evidence="1">
    <location>
        <position position="1494"/>
    </location>
    <ligand>
        <name>Zn(2+)</name>
        <dbReference type="ChEBI" id="CHEBI:29105"/>
        <label>1</label>
    </ligand>
</feature>
<feature type="binding site" evidence="1">
    <location>
        <position position="1503"/>
    </location>
    <ligand>
        <name>Zn(2+)</name>
        <dbReference type="ChEBI" id="CHEBI:29105"/>
        <label>2</label>
    </ligand>
</feature>
<feature type="binding site" evidence="1">
    <location>
        <position position="1507"/>
    </location>
    <ligand>
        <name>Zn(2+)</name>
        <dbReference type="ChEBI" id="CHEBI:29105"/>
        <label>2</label>
    </ligand>
</feature>
<feature type="binding site" evidence="1">
    <location>
        <position position="1513"/>
    </location>
    <ligand>
        <name>Zn(2+)</name>
        <dbReference type="ChEBI" id="CHEBI:29105"/>
        <label>2</label>
    </ligand>
</feature>
<feature type="binding site" evidence="1">
    <location>
        <begin position="1534"/>
        <end position="1536"/>
    </location>
    <ligand>
        <name>S-adenosyl-L-methionine</name>
        <dbReference type="ChEBI" id="CHEBI:59789"/>
    </ligand>
</feature>
<feature type="binding site" evidence="1">
    <location>
        <begin position="1577"/>
        <end position="1579"/>
    </location>
    <ligand>
        <name>S-adenosyl-L-methionine</name>
        <dbReference type="ChEBI" id="CHEBI:59789"/>
    </ligand>
</feature>
<feature type="binding site" evidence="1">
    <location>
        <begin position="1602"/>
        <end position="1603"/>
    </location>
    <ligand>
        <name>S-adenosyl-L-methionine</name>
        <dbReference type="ChEBI" id="CHEBI:59789"/>
    </ligand>
</feature>
<feature type="binding site" evidence="1">
    <location>
        <position position="1605"/>
    </location>
    <ligand>
        <name>Zn(2+)</name>
        <dbReference type="ChEBI" id="CHEBI:29105"/>
        <label>3</label>
    </ligand>
</feature>
<feature type="binding site" evidence="4">
    <location>
        <position position="1650"/>
    </location>
    <ligand>
        <name>S-adenosyl-L-methionine</name>
        <dbReference type="ChEBI" id="CHEBI:59789"/>
    </ligand>
</feature>
<feature type="binding site" evidence="1">
    <location>
        <position position="1652"/>
    </location>
    <ligand>
        <name>Zn(2+)</name>
        <dbReference type="ChEBI" id="CHEBI:29105"/>
        <label>3</label>
    </ligand>
</feature>
<feature type="binding site" evidence="4">
    <location>
        <position position="1653"/>
    </location>
    <ligand>
        <name>S-adenosyl-L-methionine</name>
        <dbReference type="ChEBI" id="CHEBI:59789"/>
    </ligand>
</feature>
<feature type="binding site" evidence="1">
    <location>
        <position position="1654"/>
    </location>
    <ligand>
        <name>Zn(2+)</name>
        <dbReference type="ChEBI" id="CHEBI:29105"/>
        <label>3</label>
    </ligand>
</feature>
<feature type="binding site" evidence="1">
    <location>
        <position position="1659"/>
    </location>
    <ligand>
        <name>Zn(2+)</name>
        <dbReference type="ChEBI" id="CHEBI:29105"/>
        <label>3</label>
    </ligand>
</feature>
<feature type="modified residue" description="Phosphoserine" evidence="18">
    <location>
        <position position="132"/>
    </location>
</feature>
<feature type="modified residue" description="Phosphoserine" evidence="18">
    <location>
        <position position="242"/>
    </location>
</feature>
<feature type="modified residue" description="Phosphoserine" evidence="18">
    <location>
        <position position="322"/>
    </location>
</feature>
<feature type="modified residue" description="Phosphoserine" evidence="18">
    <location>
        <position position="324"/>
    </location>
</feature>
<feature type="modified residue" description="Phosphoserine" evidence="1">
    <location>
        <position position="345"/>
    </location>
</feature>
<feature type="modified residue" description="Phosphoserine" evidence="1">
    <location>
        <position position="423"/>
    </location>
</feature>
<feature type="modified residue" description="Phosphoserine" evidence="1">
    <location>
        <position position="532"/>
    </location>
</feature>
<feature type="modified residue" description="Phosphoserine" evidence="1">
    <location>
        <position position="614"/>
    </location>
</feature>
<feature type="modified residue" description="Phosphoserine" evidence="18">
    <location>
        <position position="624"/>
    </location>
</feature>
<feature type="modified residue" description="Phosphothreonine" evidence="1">
    <location>
        <position position="626"/>
    </location>
</feature>
<feature type="modified residue" description="Phosphoserine" evidence="18">
    <location>
        <position position="633"/>
    </location>
</feature>
<feature type="modified residue" description="Phosphoserine" evidence="18">
    <location>
        <position position="697"/>
    </location>
</feature>
<feature type="modified residue" description="Phosphoserine" evidence="1">
    <location>
        <position position="707"/>
    </location>
</feature>
<feature type="modified residue" description="Phosphoserine" evidence="1">
    <location>
        <position position="743"/>
    </location>
</feature>
<feature type="modified residue" description="Phosphoserine" evidence="1">
    <location>
        <position position="753"/>
    </location>
</feature>
<feature type="modified residue" description="Phosphoserine" evidence="1">
    <location>
        <position position="1077"/>
    </location>
</feature>
<feature type="modified residue" description="Phosphoserine" evidence="1">
    <location>
        <position position="1201"/>
    </location>
</feature>
<feature type="modified residue" description="Phosphoserine" evidence="17">
    <location>
        <position position="1387"/>
    </location>
</feature>
<feature type="modified residue" description="Phosphoserine" evidence="17">
    <location>
        <position position="1389"/>
    </location>
</feature>
<feature type="modified residue" description="Phosphoserine" evidence="17">
    <location>
        <position position="1391"/>
    </location>
</feature>
<feature type="modified residue" description="Phosphoserine" evidence="1">
    <location>
        <position position="1670"/>
    </location>
</feature>
<feature type="modified residue" description="Phosphoserine" evidence="18">
    <location>
        <position position="1818"/>
    </location>
</feature>
<feature type="modified residue" description="Phosphoserine" evidence="18">
    <location>
        <position position="1819"/>
    </location>
</feature>
<feature type="modified residue" description="Phosphothreonine" evidence="18">
    <location>
        <position position="1827"/>
    </location>
</feature>
<feature type="modified residue" description="Phosphothreonine" evidence="1">
    <location>
        <position position="1846"/>
    </location>
</feature>
<feature type="modified residue" description="Phosphoserine" evidence="1">
    <location>
        <position position="1862"/>
    </location>
</feature>
<feature type="modified residue" description="Phosphoserine" evidence="1">
    <location>
        <position position="1926"/>
    </location>
</feature>
<feature type="modified residue" description="Phosphoserine" evidence="18">
    <location>
        <position position="1954"/>
    </location>
</feature>
<feature type="modified residue" description="Phosphoserine" evidence="18">
    <location>
        <position position="1962"/>
    </location>
</feature>
<feature type="modified residue" description="Phosphoserine" evidence="18">
    <location>
        <position position="1969"/>
    </location>
</feature>
<feature type="modified residue" description="Phosphoserine" evidence="1">
    <location>
        <position position="2053"/>
    </location>
</feature>
<feature type="modified residue" description="Phosphoserine" evidence="1">
    <location>
        <position position="2055"/>
    </location>
</feature>
<feature type="cross-link" description="Glycyl lysine isopeptide (Lys-Gly) (interchain with G-Cter in SUMO2)" evidence="1">
    <location>
        <position position="360"/>
    </location>
</feature>
<feature type="cross-link" description="Glycyl lysine isopeptide (Lys-Gly) (interchain with G-Cter in SUMO2)" evidence="1">
    <location>
        <position position="637"/>
    </location>
</feature>
<feature type="cross-link" description="Glycyl lysine isopeptide (Lys-Gly) (interchain with G-Cter in SUMO2)" evidence="1">
    <location>
        <position position="775"/>
    </location>
</feature>
<feature type="splice variant" id="VSP_047946" description="In isoform 2." evidence="13">
    <location>
        <position position="2011"/>
    </location>
</feature>
<keyword id="KW-0010">Activator</keyword>
<keyword id="KW-0025">Alternative splicing</keyword>
<keyword id="KW-0051">Antiviral defense</keyword>
<keyword id="KW-0156">Chromatin regulator</keyword>
<keyword id="KW-0158">Chromosome</keyword>
<keyword id="KW-0175">Coiled coil</keyword>
<keyword id="KW-0217">Developmental protein</keyword>
<keyword id="KW-0221">Differentiation</keyword>
<keyword id="KW-0227">DNA damage</keyword>
<keyword id="KW-0234">DNA repair</keyword>
<keyword id="KW-0391">Immunity</keyword>
<keyword id="KW-0399">Innate immunity</keyword>
<keyword id="KW-1017">Isopeptide bond</keyword>
<keyword id="KW-0479">Metal-binding</keyword>
<keyword id="KW-0489">Methyltransferase</keyword>
<keyword id="KW-0539">Nucleus</keyword>
<keyword id="KW-0597">Phosphoprotein</keyword>
<keyword id="KW-1185">Reference proteome</keyword>
<keyword id="KW-0949">S-adenosyl-L-methionine</keyword>
<keyword id="KW-0804">Transcription</keyword>
<keyword id="KW-0805">Transcription regulation</keyword>
<keyword id="KW-0808">Transferase</keyword>
<keyword id="KW-0832">Ubl conjugation</keyword>
<keyword id="KW-0862">Zinc</keyword>
<evidence type="ECO:0000250" key="1">
    <source>
        <dbReference type="UniProtKB" id="Q9BYW2"/>
    </source>
</evidence>
<evidence type="ECO:0000255" key="2"/>
<evidence type="ECO:0000255" key="3">
    <source>
        <dbReference type="PROSITE-ProRule" id="PRU00155"/>
    </source>
</evidence>
<evidence type="ECO:0000255" key="4">
    <source>
        <dbReference type="PROSITE-ProRule" id="PRU00190"/>
    </source>
</evidence>
<evidence type="ECO:0000255" key="5">
    <source>
        <dbReference type="PROSITE-ProRule" id="PRU00224"/>
    </source>
</evidence>
<evidence type="ECO:0000255" key="6">
    <source>
        <dbReference type="PROSITE-ProRule" id="PRU00562"/>
    </source>
</evidence>
<evidence type="ECO:0000256" key="7">
    <source>
        <dbReference type="SAM" id="MobiDB-lite"/>
    </source>
</evidence>
<evidence type="ECO:0000269" key="8">
    <source>
    </source>
</evidence>
<evidence type="ECO:0000269" key="9">
    <source>
    </source>
</evidence>
<evidence type="ECO:0000269" key="10">
    <source>
    </source>
</evidence>
<evidence type="ECO:0000269" key="11">
    <source>
    </source>
</evidence>
<evidence type="ECO:0000303" key="12">
    <source>
    </source>
</evidence>
<evidence type="ECO:0000303" key="13">
    <source>
    </source>
</evidence>
<evidence type="ECO:0000303" key="14">
    <source>
    </source>
</evidence>
<evidence type="ECO:0000305" key="15"/>
<evidence type="ECO:0000312" key="16">
    <source>
        <dbReference type="MGI" id="MGI:1918177"/>
    </source>
</evidence>
<evidence type="ECO:0007744" key="17">
    <source>
    </source>
</evidence>
<evidence type="ECO:0007744" key="18">
    <source>
    </source>
</evidence>
<gene>
    <name evidence="14 16" type="primary">Setd2</name>
    <name evidence="12" type="synonym">Kiaa1732</name>
    <name evidence="1" type="synonym">Kmt3a</name>
</gene>
<name>SETD2_MOUSE</name>
<accession>E9Q5F9</accession>
<accession>Q69ZC0</accession>
<accession>Q6PCY9</accession>
<accession>Q8K0F3</accession>
<reference key="1">
    <citation type="journal article" date="2009" name="PLoS Biol.">
        <title>Lineage-specific biology revealed by a finished genome assembly of the mouse.</title>
        <authorList>
            <person name="Church D.M."/>
            <person name="Goodstadt L."/>
            <person name="Hillier L.W."/>
            <person name="Zody M.C."/>
            <person name="Goldstein S."/>
            <person name="She X."/>
            <person name="Bult C.J."/>
            <person name="Agarwala R."/>
            <person name="Cherry J.L."/>
            <person name="DiCuccio M."/>
            <person name="Hlavina W."/>
            <person name="Kapustin Y."/>
            <person name="Meric P."/>
            <person name="Maglott D."/>
            <person name="Birtle Z."/>
            <person name="Marques A.C."/>
            <person name="Graves T."/>
            <person name="Zhou S."/>
            <person name="Teague B."/>
            <person name="Potamousis K."/>
            <person name="Churas C."/>
            <person name="Place M."/>
            <person name="Herschleb J."/>
            <person name="Runnheim R."/>
            <person name="Forrest D."/>
            <person name="Amos-Landgraf J."/>
            <person name="Schwartz D.C."/>
            <person name="Cheng Z."/>
            <person name="Lindblad-Toh K."/>
            <person name="Eichler E.E."/>
            <person name="Ponting C.P."/>
        </authorList>
    </citation>
    <scope>NUCLEOTIDE SEQUENCE [LARGE SCALE GENOMIC DNA]</scope>
    <source>
        <strain>C57BL/6J</strain>
    </source>
</reference>
<reference key="2">
    <citation type="journal article" date="2004" name="Genome Res.">
        <title>The status, quality, and expansion of the NIH full-length cDNA project: the Mammalian Gene Collection (MGC).</title>
        <authorList>
            <consortium name="The MGC Project Team"/>
        </authorList>
    </citation>
    <scope>NUCLEOTIDE SEQUENCE [LARGE SCALE MRNA] OF 2121-2537 AND 1800-2537 (ISOFORM 2)</scope>
    <source>
        <tissue>Mammary tumor</tissue>
    </source>
</reference>
<reference key="3">
    <citation type="journal article" date="2004" name="DNA Res.">
        <title>Prediction of the coding sequences of mouse homologues of KIAA gene: IV. The complete nucleotide sequences of 500 mouse KIAA-homologous cDNAs identified by screening of terminal sequences of cDNA clones randomly sampled from size-fractionated libraries.</title>
        <authorList>
            <person name="Okazaki N."/>
            <person name="Kikuno R."/>
            <person name="Ohara R."/>
            <person name="Inamoto S."/>
            <person name="Koseki H."/>
            <person name="Hiraoka S."/>
            <person name="Saga Y."/>
            <person name="Seino S."/>
            <person name="Nishimura M."/>
            <person name="Kaisho T."/>
            <person name="Hoshino K."/>
            <person name="Kitamura H."/>
            <person name="Nagase T."/>
            <person name="Ohara O."/>
            <person name="Koga H."/>
        </authorList>
    </citation>
    <scope>NUCLEOTIDE SEQUENCE [LARGE SCALE MRNA] OF 1834-2537 (ISOFORM 1)</scope>
    <source>
        <tissue>Thymus</tissue>
    </source>
</reference>
<reference key="4">
    <citation type="journal article" date="2008" name="EMBO J.">
        <title>Dynamic histone H3 methylation during gene induction: HYPB/Setd2 mediates all H3K36 trimethylation.</title>
        <authorList>
            <person name="Edmunds J.W."/>
            <person name="Mahadevan L.C."/>
            <person name="Clayton A.L."/>
        </authorList>
    </citation>
    <scope>FUNCTION</scope>
    <scope>SUBCELLULAR LOCATION</scope>
    <scope>CATALYTIC ACTIVITY</scope>
</reference>
<reference key="5">
    <citation type="journal article" date="2009" name="Immunity">
        <title>The phagosomal proteome in interferon-gamma-activated macrophages.</title>
        <authorList>
            <person name="Trost M."/>
            <person name="English L."/>
            <person name="Lemieux S."/>
            <person name="Courcelles M."/>
            <person name="Desjardins M."/>
            <person name="Thibault P."/>
        </authorList>
    </citation>
    <scope>PHOSPHORYLATION [LARGE SCALE ANALYSIS] AT SER-1387; SER-1389 AND SER-1391</scope>
    <scope>IDENTIFICATION BY MASS SPECTROMETRY [LARGE SCALE ANALYSIS]</scope>
</reference>
<reference key="6">
    <citation type="journal article" date="2010" name="Cell">
        <title>A tissue-specific atlas of mouse protein phosphorylation and expression.</title>
        <authorList>
            <person name="Huttlin E.L."/>
            <person name="Jedrychowski M.P."/>
            <person name="Elias J.E."/>
            <person name="Goswami T."/>
            <person name="Rad R."/>
            <person name="Beausoleil S.A."/>
            <person name="Villen J."/>
            <person name="Haas W."/>
            <person name="Sowa M.E."/>
            <person name="Gygi S.P."/>
        </authorList>
    </citation>
    <scope>PHOSPHORYLATION [LARGE SCALE ANALYSIS] AT SER-132; SER-242; SER-322; SER-324; SER-624; SER-633; SER-697; SER-1818; SER-1819; THR-1827; SER-1954; SER-1962 AND SER-1969</scope>
    <scope>IDENTIFICATION BY MASS SPECTROMETRY [LARGE SCALE ANALYSIS]</scope>
    <source>
        <tissue>Brain</tissue>
        <tissue>Brown adipose tissue</tissue>
        <tissue>Heart</tissue>
        <tissue>Kidney</tissue>
        <tissue>Liver</tissue>
        <tissue>Lung</tissue>
        <tissue>Pancreas</tissue>
        <tissue>Spleen</tissue>
        <tissue>Testis</tissue>
    </source>
</reference>
<reference key="7">
    <citation type="journal article" date="2010" name="Proc. Natl. Acad. Sci. U.S.A.">
        <title>Histone H3 lysine 36 methyltransferase Hypb/Setd2 is required for embryonic vascular remodeling.</title>
        <authorList>
            <person name="Hu M."/>
            <person name="Sun X.J."/>
            <person name="Zhang Y.L."/>
            <person name="Kuang Y."/>
            <person name="Hu C.Q."/>
            <person name="Wu W.L."/>
            <person name="Shen S.H."/>
            <person name="Du T.T."/>
            <person name="Li H."/>
            <person name="He F."/>
            <person name="Xiao H.S."/>
            <person name="Wang Z.G."/>
            <person name="Liu T.X."/>
            <person name="Lu H."/>
            <person name="Huang Q.H."/>
            <person name="Chen S.J."/>
            <person name="Chen Z."/>
        </authorList>
    </citation>
    <scope>FUNCTION</scope>
    <scope>DISRUPTION PHENOTYPE</scope>
</reference>
<reference key="8">
    <citation type="journal article" date="2014" name="Cell Rep.">
        <title>H3K36 histone methyltransferase Setd2 is required for murine embryonic stem cell differentiation toward endoderm.</title>
        <authorList>
            <person name="Zhang Y."/>
            <person name="Xie S."/>
            <person name="Zhou Y."/>
            <person name="Xie Y."/>
            <person name="Liu P."/>
            <person name="Sun M."/>
            <person name="Xiao H."/>
            <person name="Jin Y."/>
            <person name="Sun X."/>
            <person name="Chen Z."/>
            <person name="Huang Q."/>
            <person name="Chen S."/>
        </authorList>
    </citation>
    <scope>FUNCTION</scope>
</reference>
<reference key="9">
    <citation type="journal article" date="2016" name="Cell">
        <title>Dual chromatin and cytoskeletal remodeling by SETD2.</title>
        <authorList>
            <person name="Park I.Y."/>
            <person name="Powell R.T."/>
            <person name="Tripathi D.N."/>
            <person name="Dere R."/>
            <person name="Ho T.H."/>
            <person name="Blasius T.L."/>
            <person name="Chiang Y.C."/>
            <person name="Davis I.J."/>
            <person name="Fahey C.C."/>
            <person name="Hacker K.E."/>
            <person name="Verhey K.J."/>
            <person name="Bedford M.T."/>
            <person name="Jonasch E."/>
            <person name="Rathmell W.K."/>
            <person name="Walker C.L."/>
        </authorList>
    </citation>
    <scope>FUNCTION AS ALPHA-TUBULIN METHYLTRANSFERASE</scope>
</reference>
<proteinExistence type="evidence at protein level"/>
<dbReference type="EC" id="2.1.1.359" evidence="8"/>
<dbReference type="EC" id="2.1.1.-" evidence="11"/>
<dbReference type="EMBL" id="AC132103">
    <property type="status" value="NOT_ANNOTATED_CDS"/>
    <property type="molecule type" value="Genomic_DNA"/>
</dbReference>
<dbReference type="EMBL" id="BC031601">
    <property type="protein sequence ID" value="AAH31601.1"/>
    <property type="molecule type" value="mRNA"/>
</dbReference>
<dbReference type="EMBL" id="BC059049">
    <property type="protein sequence ID" value="AAH59049.1"/>
    <property type="molecule type" value="mRNA"/>
</dbReference>
<dbReference type="EMBL" id="AK173246">
    <property type="protein sequence ID" value="BAD32524.1"/>
    <property type="molecule type" value="mRNA"/>
</dbReference>
<dbReference type="CCDS" id="CCDS40781.2">
    <molecule id="E9Q5F9-1"/>
</dbReference>
<dbReference type="RefSeq" id="NP_001074809.2">
    <molecule id="E9Q5F9-1"/>
    <property type="nucleotide sequence ID" value="NM_001081340.3"/>
</dbReference>
<dbReference type="BMRB" id="E9Q5F9"/>
<dbReference type="SMR" id="E9Q5F9"/>
<dbReference type="BioGRID" id="231695">
    <property type="interactions" value="15"/>
</dbReference>
<dbReference type="FunCoup" id="E9Q5F9">
    <property type="interactions" value="4205"/>
</dbReference>
<dbReference type="IntAct" id="E9Q5F9">
    <property type="interactions" value="8"/>
</dbReference>
<dbReference type="STRING" id="10090.ENSMUSP00000116313"/>
<dbReference type="GlyGen" id="E9Q5F9">
    <property type="glycosylation" value="5 sites, 1 O-linked glycan (1 site)"/>
</dbReference>
<dbReference type="iPTMnet" id="E9Q5F9"/>
<dbReference type="PhosphoSitePlus" id="E9Q5F9"/>
<dbReference type="jPOST" id="E9Q5F9"/>
<dbReference type="PaxDb" id="10090-ENSMUSP00000116313"/>
<dbReference type="PeptideAtlas" id="E9Q5F9"/>
<dbReference type="ProteomicsDB" id="261169">
    <molecule id="E9Q5F9-1"/>
</dbReference>
<dbReference type="ProteomicsDB" id="261170">
    <molecule id="E9Q5F9-2"/>
</dbReference>
<dbReference type="Pumba" id="E9Q5F9"/>
<dbReference type="Antibodypedia" id="29842">
    <property type="antibodies" value="349 antibodies from 33 providers"/>
</dbReference>
<dbReference type="Ensembl" id="ENSMUST00000153838.8">
    <molecule id="E9Q5F9-1"/>
    <property type="protein sequence ID" value="ENSMUSP00000116313.3"/>
    <property type="gene ID" value="ENSMUSG00000044791.18"/>
</dbReference>
<dbReference type="GeneID" id="235626"/>
<dbReference type="KEGG" id="mmu:235626"/>
<dbReference type="UCSC" id="uc009rug.2">
    <molecule id="E9Q5F9-1"/>
    <property type="organism name" value="mouse"/>
</dbReference>
<dbReference type="AGR" id="MGI:1918177"/>
<dbReference type="CTD" id="29072"/>
<dbReference type="MGI" id="MGI:1918177">
    <property type="gene designation" value="Setd2"/>
</dbReference>
<dbReference type="VEuPathDB" id="HostDB:ENSMUSG00000044791"/>
<dbReference type="eggNOG" id="KOG4442">
    <property type="taxonomic scope" value="Eukaryota"/>
</dbReference>
<dbReference type="GeneTree" id="ENSGT00940000160086"/>
<dbReference type="HOGENOM" id="CLU_000810_1_0_1"/>
<dbReference type="InParanoid" id="E9Q5F9"/>
<dbReference type="OMA" id="RTCFPME"/>
<dbReference type="OrthoDB" id="422362at2759"/>
<dbReference type="PhylomeDB" id="E9Q5F9"/>
<dbReference type="TreeFam" id="TF106477"/>
<dbReference type="BRENDA" id="2.1.1.359">
    <property type="organism ID" value="3474"/>
</dbReference>
<dbReference type="Reactome" id="R-MMU-3214841">
    <property type="pathway name" value="PKMTs methylate histone lysines"/>
</dbReference>
<dbReference type="BioGRID-ORCS" id="235626">
    <property type="hits" value="24 hits in 122 CRISPR screens"/>
</dbReference>
<dbReference type="ChiTaRS" id="Setd2">
    <property type="organism name" value="mouse"/>
</dbReference>
<dbReference type="PRO" id="PR:E9Q5F9"/>
<dbReference type="Proteomes" id="UP000000589">
    <property type="component" value="Chromosome 9"/>
</dbReference>
<dbReference type="RNAct" id="E9Q5F9">
    <property type="molecule type" value="protein"/>
</dbReference>
<dbReference type="Bgee" id="ENSMUSG00000044791">
    <property type="expression patterns" value="Expressed in manus and 228 other cell types or tissues"/>
</dbReference>
<dbReference type="ExpressionAtlas" id="E9Q5F9">
    <property type="expression patterns" value="baseline and differential"/>
</dbReference>
<dbReference type="GO" id="GO:0005694">
    <property type="term" value="C:chromosome"/>
    <property type="evidence" value="ECO:0000314"/>
    <property type="project" value="UniProtKB"/>
</dbReference>
<dbReference type="GO" id="GO:0005634">
    <property type="term" value="C:nucleus"/>
    <property type="evidence" value="ECO:0000314"/>
    <property type="project" value="MGI"/>
</dbReference>
<dbReference type="GO" id="GO:0046975">
    <property type="term" value="F:histone H3K36 methyltransferase activity"/>
    <property type="evidence" value="ECO:0000315"/>
    <property type="project" value="UniProtKB"/>
</dbReference>
<dbReference type="GO" id="GO:0140955">
    <property type="term" value="F:histone H3K36 trimethyltransferase activity"/>
    <property type="evidence" value="ECO:0007669"/>
    <property type="project" value="UniProtKB-EC"/>
</dbReference>
<dbReference type="GO" id="GO:0046872">
    <property type="term" value="F:metal ion binding"/>
    <property type="evidence" value="ECO:0007669"/>
    <property type="project" value="UniProtKB-KW"/>
</dbReference>
<dbReference type="GO" id="GO:0016279">
    <property type="term" value="F:protein-lysine N-methyltransferase activity"/>
    <property type="evidence" value="ECO:0000250"/>
    <property type="project" value="UniProtKB"/>
</dbReference>
<dbReference type="GO" id="GO:0001525">
    <property type="term" value="P:angiogenesis"/>
    <property type="evidence" value="ECO:0000315"/>
    <property type="project" value="MGI"/>
</dbReference>
<dbReference type="GO" id="GO:0035441">
    <property type="term" value="P:cell migration involved in vasculogenesis"/>
    <property type="evidence" value="ECO:0000315"/>
    <property type="project" value="MGI"/>
</dbReference>
<dbReference type="GO" id="GO:0060977">
    <property type="term" value="P:coronary vasculature morphogenesis"/>
    <property type="evidence" value="ECO:0000315"/>
    <property type="project" value="MGI"/>
</dbReference>
<dbReference type="GO" id="GO:0051607">
    <property type="term" value="P:defense response to virus"/>
    <property type="evidence" value="ECO:0000250"/>
    <property type="project" value="UniProtKB"/>
</dbReference>
<dbReference type="GO" id="GO:0048701">
    <property type="term" value="P:embryonic cranial skeleton morphogenesis"/>
    <property type="evidence" value="ECO:0000315"/>
    <property type="project" value="MGI"/>
</dbReference>
<dbReference type="GO" id="GO:0048568">
    <property type="term" value="P:embryonic organ development"/>
    <property type="evidence" value="ECO:0000315"/>
    <property type="project" value="MGI"/>
</dbReference>
<dbReference type="GO" id="GO:0060669">
    <property type="term" value="P:embryonic placenta morphogenesis"/>
    <property type="evidence" value="ECO:0000315"/>
    <property type="project" value="MGI"/>
</dbReference>
<dbReference type="GO" id="GO:0035987">
    <property type="term" value="P:endodermal cell differentiation"/>
    <property type="evidence" value="ECO:0000315"/>
    <property type="project" value="UniProtKB"/>
</dbReference>
<dbReference type="GO" id="GO:0030900">
    <property type="term" value="P:forebrain development"/>
    <property type="evidence" value="ECO:0000315"/>
    <property type="project" value="MGI"/>
</dbReference>
<dbReference type="GO" id="GO:0048332">
    <property type="term" value="P:mesoderm morphogenesis"/>
    <property type="evidence" value="ECO:0000315"/>
    <property type="project" value="MGI"/>
</dbReference>
<dbReference type="GO" id="GO:1902850">
    <property type="term" value="P:microtubule cytoskeleton organization involved in mitosis"/>
    <property type="evidence" value="ECO:0000250"/>
    <property type="project" value="UniProtKB"/>
</dbReference>
<dbReference type="GO" id="GO:0006298">
    <property type="term" value="P:mismatch repair"/>
    <property type="evidence" value="ECO:0000250"/>
    <property type="project" value="UniProtKB"/>
</dbReference>
<dbReference type="GO" id="GO:0001763">
    <property type="term" value="P:morphogenesis of a branching structure"/>
    <property type="evidence" value="ECO:0000315"/>
    <property type="project" value="MGI"/>
</dbReference>
<dbReference type="GO" id="GO:0001843">
    <property type="term" value="P:neural tube closure"/>
    <property type="evidence" value="ECO:0000315"/>
    <property type="project" value="MGI"/>
</dbReference>
<dbReference type="GO" id="GO:0034728">
    <property type="term" value="P:nucleosome organization"/>
    <property type="evidence" value="ECO:0000250"/>
    <property type="project" value="UniProtKB"/>
</dbReference>
<dbReference type="GO" id="GO:0018023">
    <property type="term" value="P:peptidyl-lysine trimethylation"/>
    <property type="evidence" value="ECO:0000250"/>
    <property type="project" value="UniProtKB"/>
</dbReference>
<dbReference type="GO" id="GO:0060039">
    <property type="term" value="P:pericardium development"/>
    <property type="evidence" value="ECO:0000315"/>
    <property type="project" value="MGI"/>
</dbReference>
<dbReference type="GO" id="GO:0032727">
    <property type="term" value="P:positive regulation of interferon-alpha production"/>
    <property type="evidence" value="ECO:0000250"/>
    <property type="project" value="UniProtKB"/>
</dbReference>
<dbReference type="GO" id="GO:0032465">
    <property type="term" value="P:regulation of cytokinesis"/>
    <property type="evidence" value="ECO:0000250"/>
    <property type="project" value="UniProtKB"/>
</dbReference>
<dbReference type="GO" id="GO:0006355">
    <property type="term" value="P:regulation of DNA-templated transcription"/>
    <property type="evidence" value="ECO:0007669"/>
    <property type="project" value="InterPro"/>
</dbReference>
<dbReference type="GO" id="GO:0010569">
    <property type="term" value="P:regulation of double-strand break repair via homologous recombination"/>
    <property type="evidence" value="ECO:0000250"/>
    <property type="project" value="UniProtKB"/>
</dbReference>
<dbReference type="GO" id="GO:0010468">
    <property type="term" value="P:regulation of gene expression"/>
    <property type="evidence" value="ECO:0000315"/>
    <property type="project" value="MGI"/>
</dbReference>
<dbReference type="GO" id="GO:1905634">
    <property type="term" value="P:regulation of protein localization to chromatin"/>
    <property type="evidence" value="ECO:0000250"/>
    <property type="project" value="UniProtKB"/>
</dbReference>
<dbReference type="GO" id="GO:0034340">
    <property type="term" value="P:response to type I interferon"/>
    <property type="evidence" value="ECO:0000250"/>
    <property type="project" value="UniProtKB"/>
</dbReference>
<dbReference type="GO" id="GO:0048864">
    <property type="term" value="P:stem cell development"/>
    <property type="evidence" value="ECO:0000315"/>
    <property type="project" value="MGI"/>
</dbReference>
<dbReference type="GO" id="GO:0048863">
    <property type="term" value="P:stem cell differentiation"/>
    <property type="evidence" value="ECO:0000315"/>
    <property type="project" value="UniProtKB"/>
</dbReference>
<dbReference type="GO" id="GO:0006368">
    <property type="term" value="P:transcription elongation by RNA polymerase II"/>
    <property type="evidence" value="ECO:0000250"/>
    <property type="project" value="UniProtKB"/>
</dbReference>
<dbReference type="GO" id="GO:0001570">
    <property type="term" value="P:vasculogenesis"/>
    <property type="evidence" value="ECO:0000315"/>
    <property type="project" value="MGI"/>
</dbReference>
<dbReference type="CDD" id="cd19172">
    <property type="entry name" value="SET_SETD2"/>
    <property type="match status" value="1"/>
</dbReference>
<dbReference type="CDD" id="cd00201">
    <property type="entry name" value="WW"/>
    <property type="match status" value="1"/>
</dbReference>
<dbReference type="FunFam" id="1.10.1740.100:FF:000001">
    <property type="entry name" value="Histone-lysine N-methyltransferase"/>
    <property type="match status" value="1"/>
</dbReference>
<dbReference type="FunFam" id="1.20.930.10:FF:000004">
    <property type="entry name" value="Histone-lysine N-methyltransferase"/>
    <property type="match status" value="1"/>
</dbReference>
<dbReference type="FunFam" id="2.170.270.10:FF:000016">
    <property type="entry name" value="Histone-lysine N-methyltransferase"/>
    <property type="match status" value="1"/>
</dbReference>
<dbReference type="Gene3D" id="2.20.70.10">
    <property type="match status" value="1"/>
</dbReference>
<dbReference type="Gene3D" id="1.20.930.10">
    <property type="entry name" value="Conserved domain common to transcription factors TFIIS, elongin A, CRSP70"/>
    <property type="match status" value="1"/>
</dbReference>
<dbReference type="Gene3D" id="2.170.270.10">
    <property type="entry name" value="SET domain"/>
    <property type="match status" value="1"/>
</dbReference>
<dbReference type="Gene3D" id="1.10.1740.100">
    <property type="entry name" value="Set2, Rpb1 interacting domain"/>
    <property type="match status" value="1"/>
</dbReference>
<dbReference type="InterPro" id="IPR006560">
    <property type="entry name" value="AWS_dom"/>
</dbReference>
<dbReference type="InterPro" id="IPR003616">
    <property type="entry name" value="Post-SET_dom"/>
</dbReference>
<dbReference type="InterPro" id="IPR001214">
    <property type="entry name" value="SET_dom"/>
</dbReference>
<dbReference type="InterPro" id="IPR046341">
    <property type="entry name" value="SET_dom_sf"/>
</dbReference>
<dbReference type="InterPro" id="IPR044437">
    <property type="entry name" value="SETD2/Set2_SET"/>
</dbReference>
<dbReference type="InterPro" id="IPR042294">
    <property type="entry name" value="SETD2_animal"/>
</dbReference>
<dbReference type="InterPro" id="IPR013257">
    <property type="entry name" value="SRI"/>
</dbReference>
<dbReference type="InterPro" id="IPR038190">
    <property type="entry name" value="SRI_sf"/>
</dbReference>
<dbReference type="InterPro" id="IPR035441">
    <property type="entry name" value="TFIIS/LEDGF_dom_sf"/>
</dbReference>
<dbReference type="InterPro" id="IPR001202">
    <property type="entry name" value="WW_dom"/>
</dbReference>
<dbReference type="InterPro" id="IPR036020">
    <property type="entry name" value="WW_dom_sf"/>
</dbReference>
<dbReference type="PANTHER" id="PTHR46711">
    <property type="entry name" value="HISTONE-LYSINE N-METHYLTRANSFERASE SETD2"/>
    <property type="match status" value="1"/>
</dbReference>
<dbReference type="PANTHER" id="PTHR46711:SF1">
    <property type="entry name" value="HISTONE-LYSINE N-METHYLTRANSFERASE SETD2"/>
    <property type="match status" value="1"/>
</dbReference>
<dbReference type="Pfam" id="PF17907">
    <property type="entry name" value="AWS"/>
    <property type="match status" value="1"/>
</dbReference>
<dbReference type="Pfam" id="PF00856">
    <property type="entry name" value="SET"/>
    <property type="match status" value="1"/>
</dbReference>
<dbReference type="Pfam" id="PF08236">
    <property type="entry name" value="SRI"/>
    <property type="match status" value="1"/>
</dbReference>
<dbReference type="Pfam" id="PF00397">
    <property type="entry name" value="WW"/>
    <property type="match status" value="1"/>
</dbReference>
<dbReference type="SMART" id="SM00570">
    <property type="entry name" value="AWS"/>
    <property type="match status" value="1"/>
</dbReference>
<dbReference type="SMART" id="SM00508">
    <property type="entry name" value="PostSET"/>
    <property type="match status" value="1"/>
</dbReference>
<dbReference type="SMART" id="SM00317">
    <property type="entry name" value="SET"/>
    <property type="match status" value="1"/>
</dbReference>
<dbReference type="SMART" id="SM00456">
    <property type="entry name" value="WW"/>
    <property type="match status" value="1"/>
</dbReference>
<dbReference type="SUPFAM" id="SSF82199">
    <property type="entry name" value="SET domain"/>
    <property type="match status" value="1"/>
</dbReference>
<dbReference type="SUPFAM" id="SSF51045">
    <property type="entry name" value="WW domain"/>
    <property type="match status" value="1"/>
</dbReference>
<dbReference type="PROSITE" id="PS51215">
    <property type="entry name" value="AWS"/>
    <property type="match status" value="1"/>
</dbReference>
<dbReference type="PROSITE" id="PS50868">
    <property type="entry name" value="POST_SET"/>
    <property type="match status" value="1"/>
</dbReference>
<dbReference type="PROSITE" id="PS50280">
    <property type="entry name" value="SET"/>
    <property type="match status" value="1"/>
</dbReference>
<dbReference type="PROSITE" id="PS01159">
    <property type="entry name" value="WW_DOMAIN_1"/>
    <property type="match status" value="1"/>
</dbReference>
<dbReference type="PROSITE" id="PS50020">
    <property type="entry name" value="WW_DOMAIN_2"/>
    <property type="match status" value="1"/>
</dbReference>